<comment type="function">
    <text evidence="6 7 8">Mediates E2-dependent protein ubiquitination. Acts as a negative regulator of abscisic acid signaling. Required for ABI5 degradation, by mediating its ubiquitination. Together with EDR1, may regulate endocytic trafficking and/or the formation of signaling complexes on trans-Golgi network (TGN)/ early endosome (EE) vesicles during stress responses.</text>
</comment>
<comment type="catalytic activity">
    <reaction>
        <text>L-seryl-[protein] + ATP = O-phospho-L-seryl-[protein] + ADP + H(+)</text>
        <dbReference type="Rhea" id="RHEA:17989"/>
        <dbReference type="Rhea" id="RHEA-COMP:9863"/>
        <dbReference type="Rhea" id="RHEA-COMP:11604"/>
        <dbReference type="ChEBI" id="CHEBI:15378"/>
        <dbReference type="ChEBI" id="CHEBI:29999"/>
        <dbReference type="ChEBI" id="CHEBI:30616"/>
        <dbReference type="ChEBI" id="CHEBI:83421"/>
        <dbReference type="ChEBI" id="CHEBI:456216"/>
        <dbReference type="EC" id="2.7.11.1"/>
    </reaction>
</comment>
<comment type="catalytic activity">
    <reaction>
        <text>L-threonyl-[protein] + ATP = O-phospho-L-threonyl-[protein] + ADP + H(+)</text>
        <dbReference type="Rhea" id="RHEA:46608"/>
        <dbReference type="Rhea" id="RHEA-COMP:11060"/>
        <dbReference type="Rhea" id="RHEA-COMP:11605"/>
        <dbReference type="ChEBI" id="CHEBI:15378"/>
        <dbReference type="ChEBI" id="CHEBI:30013"/>
        <dbReference type="ChEBI" id="CHEBI:30616"/>
        <dbReference type="ChEBI" id="CHEBI:61977"/>
        <dbReference type="ChEBI" id="CHEBI:456216"/>
        <dbReference type="EC" id="2.7.11.1"/>
    </reaction>
</comment>
<comment type="catalytic activity">
    <reaction>
        <text>S-ubiquitinyl-[E2 ubiquitin-conjugating enzyme]-L-cysteine + [acceptor protein]-L-lysine = [E2 ubiquitin-conjugating enzyme]-L-cysteine + N(6)-ubiquitinyl-[acceptor protein]-L-lysine.</text>
        <dbReference type="EC" id="2.3.2.27"/>
    </reaction>
</comment>
<comment type="pathway">
    <text>Protein modification; protein ubiquitination.</text>
</comment>
<comment type="subunit">
    <text evidence="5 8">Interacts with ABI5 and EDR1.</text>
</comment>
<comment type="interaction">
    <interactant intactId="EBI-1955729">
        <id>Q9FY48</id>
    </interactant>
    <interactant intactId="EBI-1778690">
        <id>Q9SJN0</id>
        <label>ABI5</label>
    </interactant>
    <organismsDiffer>false</organismsDiffer>
    <experiments>2</experiments>
</comment>
<comment type="subcellular location">
    <subcellularLocation>
        <location evidence="8">Golgi apparatus</location>
        <location evidence="8">trans-Golgi network</location>
    </subcellularLocation>
    <subcellularLocation>
        <location evidence="8">Early endosome</location>
    </subcellularLocation>
</comment>
<comment type="alternative products">
    <event type="alternative splicing"/>
    <isoform>
        <id>Q9FY48-1</id>
        <name>1</name>
        <sequence type="displayed"/>
    </isoform>
    <text>A number of isoforms are produced. According to EST sequences.</text>
</comment>
<comment type="tissue specificity">
    <text evidence="6">Expressed in all tissues of young seedlings. In flowering plants, only detected in the youngest part of the stem, anthers and the receptacle of immature siliques. Not found in mature leave, older parts of the stem, flower parts other than anthers or mature siliques.</text>
</comment>
<comment type="developmental stage">
    <text evidence="6">Expressed mainly in the actively growing and dividing cells.</text>
</comment>
<comment type="domain">
    <text evidence="1">The RING-type zinc finger domain mediates binding to an E2 ubiquitin-conjugating enzyme.</text>
</comment>
<comment type="PTM">
    <text evidence="5 7">Autophosphotylated and autoubiquitinated in vitro.</text>
</comment>
<comment type="PTM">
    <text evidence="5 7">Phosphorylation enhances self-ubiquitination.</text>
</comment>
<comment type="PTM">
    <text evidence="5 7">Autoubiquitinated in response to abscisic acid (ABA) and subsequently targeted to proteolysis.</text>
</comment>
<comment type="disruption phenotype">
    <text evidence="5 7">Plants are seedling lethal and are hypersensitive to glucose and abscisic acid. High accumulation of ABI5.</text>
</comment>
<comment type="caution">
    <text evidence="9">The protein kinase domain is predicted to be catalytically inactive but PubMed:17194765 shows an in vitro activity.</text>
</comment>
<comment type="sequence caution" evidence="9">
    <conflict type="erroneous gene model prediction">
        <sequence resource="EMBL-CDS" id="CAC05430"/>
    </conflict>
</comment>
<comment type="sequence caution" evidence="9">
    <conflict type="erroneous gene model prediction">
        <sequence resource="EMBL-CDS" id="CAC05431"/>
    </conflict>
</comment>
<name>KEG_ARATH</name>
<reference key="1">
    <citation type="journal article" date="2006" name="Plant Cell">
        <title>KEEP ON GOING, a RING E3 ligase essential for Arabidopsis growth and development, is involved in abscisic acid signaling.</title>
        <authorList>
            <person name="Stone S.L."/>
            <person name="Williams L.A."/>
            <person name="Farmer L.M."/>
            <person name="Vierstra R.D."/>
            <person name="Callis J."/>
        </authorList>
    </citation>
    <scope>NUCLEOTIDE SEQUENCE [MRNA]</scope>
    <scope>DISRUPTION PHENOTYPE</scope>
    <scope>PHOSPHORYLATION</scope>
    <scope>UBIQUITINATION</scope>
    <scope>INTERACTION WITH ABI5</scope>
</reference>
<reference key="2">
    <citation type="journal article" date="2000" name="Nature">
        <title>Sequence and analysis of chromosome 5 of the plant Arabidopsis thaliana.</title>
        <authorList>
            <person name="Tabata S."/>
            <person name="Kaneko T."/>
            <person name="Nakamura Y."/>
            <person name="Kotani H."/>
            <person name="Kato T."/>
            <person name="Asamizu E."/>
            <person name="Miyajima N."/>
            <person name="Sasamoto S."/>
            <person name="Kimura T."/>
            <person name="Hosouchi T."/>
            <person name="Kawashima K."/>
            <person name="Kohara M."/>
            <person name="Matsumoto M."/>
            <person name="Matsuno A."/>
            <person name="Muraki A."/>
            <person name="Nakayama S."/>
            <person name="Nakazaki N."/>
            <person name="Naruo K."/>
            <person name="Okumura S."/>
            <person name="Shinpo S."/>
            <person name="Takeuchi C."/>
            <person name="Wada T."/>
            <person name="Watanabe A."/>
            <person name="Yamada M."/>
            <person name="Yasuda M."/>
            <person name="Sato S."/>
            <person name="de la Bastide M."/>
            <person name="Huang E."/>
            <person name="Spiegel L."/>
            <person name="Gnoj L."/>
            <person name="O'Shaughnessy A."/>
            <person name="Preston R."/>
            <person name="Habermann K."/>
            <person name="Murray J."/>
            <person name="Johnson D."/>
            <person name="Rohlfing T."/>
            <person name="Nelson J."/>
            <person name="Stoneking T."/>
            <person name="Pepin K."/>
            <person name="Spieth J."/>
            <person name="Sekhon M."/>
            <person name="Armstrong J."/>
            <person name="Becker M."/>
            <person name="Belter E."/>
            <person name="Cordum H."/>
            <person name="Cordes M."/>
            <person name="Courtney L."/>
            <person name="Courtney W."/>
            <person name="Dante M."/>
            <person name="Du H."/>
            <person name="Edwards J."/>
            <person name="Fryman J."/>
            <person name="Haakensen B."/>
            <person name="Lamar E."/>
            <person name="Latreille P."/>
            <person name="Leonard S."/>
            <person name="Meyer R."/>
            <person name="Mulvaney E."/>
            <person name="Ozersky P."/>
            <person name="Riley A."/>
            <person name="Strowmatt C."/>
            <person name="Wagner-McPherson C."/>
            <person name="Wollam A."/>
            <person name="Yoakum M."/>
            <person name="Bell M."/>
            <person name="Dedhia N."/>
            <person name="Parnell L."/>
            <person name="Shah R."/>
            <person name="Rodriguez M."/>
            <person name="Hoon See L."/>
            <person name="Vil D."/>
            <person name="Baker J."/>
            <person name="Kirchoff K."/>
            <person name="Toth K."/>
            <person name="King L."/>
            <person name="Bahret A."/>
            <person name="Miller B."/>
            <person name="Marra M.A."/>
            <person name="Martienssen R."/>
            <person name="McCombie W.R."/>
            <person name="Wilson R.K."/>
            <person name="Murphy G."/>
            <person name="Bancroft I."/>
            <person name="Volckaert G."/>
            <person name="Wambutt R."/>
            <person name="Duesterhoeft A."/>
            <person name="Stiekema W."/>
            <person name="Pohl T."/>
            <person name="Entian K.-D."/>
            <person name="Terryn N."/>
            <person name="Hartley N."/>
            <person name="Bent E."/>
            <person name="Johnson S."/>
            <person name="Langham S.-A."/>
            <person name="McCullagh B."/>
            <person name="Robben J."/>
            <person name="Grymonprez B."/>
            <person name="Zimmermann W."/>
            <person name="Ramsperger U."/>
            <person name="Wedler H."/>
            <person name="Balke K."/>
            <person name="Wedler E."/>
            <person name="Peters S."/>
            <person name="van Staveren M."/>
            <person name="Dirkse W."/>
            <person name="Mooijman P."/>
            <person name="Klein Lankhorst R."/>
            <person name="Weitzenegger T."/>
            <person name="Bothe G."/>
            <person name="Rose M."/>
            <person name="Hauf J."/>
            <person name="Berneiser S."/>
            <person name="Hempel S."/>
            <person name="Feldpausch M."/>
            <person name="Lamberth S."/>
            <person name="Villarroel R."/>
            <person name="Gielen J."/>
            <person name="Ardiles W."/>
            <person name="Bents O."/>
            <person name="Lemcke K."/>
            <person name="Kolesov G."/>
            <person name="Mayer K.F.X."/>
            <person name="Rudd S."/>
            <person name="Schoof H."/>
            <person name="Schueller C."/>
            <person name="Zaccaria P."/>
            <person name="Mewes H.-W."/>
            <person name="Bevan M."/>
            <person name="Fransz P.F."/>
        </authorList>
    </citation>
    <scope>NUCLEOTIDE SEQUENCE [LARGE SCALE GENOMIC DNA]</scope>
    <source>
        <strain>cv. Columbia</strain>
    </source>
</reference>
<reference key="3">
    <citation type="journal article" date="2017" name="Plant J.">
        <title>Araport11: a complete reannotation of the Arabidopsis thaliana reference genome.</title>
        <authorList>
            <person name="Cheng C.Y."/>
            <person name="Krishnakumar V."/>
            <person name="Chan A.P."/>
            <person name="Thibaud-Nissen F."/>
            <person name="Schobel S."/>
            <person name="Town C.D."/>
        </authorList>
    </citation>
    <scope>GENOME REANNOTATION</scope>
    <source>
        <strain>cv. Columbia</strain>
    </source>
</reference>
<reference key="4">
    <citation type="journal article" date="2002" name="Genome Biol.">
        <title>Evaluation and classification of RING-finger domains encoded by the Arabidopsis genome.</title>
        <authorList>
            <person name="Kosarev P."/>
            <person name="Mayer K.F.X."/>
            <person name="Hardtke C.S."/>
        </authorList>
    </citation>
    <scope>GENE FAMILY ORGANIZATION</scope>
</reference>
<reference key="5">
    <citation type="journal article" date="2005" name="Plant Physiol.">
        <title>Functional analysis of the RING-type ubiquitin ligase family of Arabidopsis.</title>
        <authorList>
            <person name="Stone S.L."/>
            <person name="Hauksdottir H."/>
            <person name="Troy A."/>
            <person name="Herschleb J."/>
            <person name="Kraft E."/>
            <person name="Callis J."/>
        </authorList>
    </citation>
    <scope>GENE FAMILY</scope>
</reference>
<reference key="6">
    <citation type="journal article" date="2008" name="Plant Physiol.">
        <title>Powdery mildew resistance conferred by loss of the ENHANCED DISEASE RESISTANCE1 protein kinase is suppressed by a missense mutation in KEEP ON GOING, a regulator of abscisic acid signaling.</title>
        <authorList>
            <person name="Wawrzynska A."/>
            <person name="Christiansen K.M."/>
            <person name="Lan Y."/>
            <person name="Rodibaugh N.L."/>
            <person name="Innes R.W."/>
        </authorList>
    </citation>
    <scope>FUNCTION</scope>
    <scope>TISSUE SPECIFICITY</scope>
    <scope>DEVELOPMENTAL STAGE</scope>
    <scope>MUTAGENESIS OF GLY-1144</scope>
</reference>
<reference key="7">
    <citation type="journal article" date="2010" name="Plant Cell">
        <title>Abscisic acid increases Arabidopsis ABI5 transcription factor levels by promoting KEG E3 ligase self-ubiquitination and proteasomal degradation.</title>
        <authorList>
            <person name="Liu H."/>
            <person name="Stone S.L."/>
        </authorList>
    </citation>
    <scope>FUNCTION</scope>
    <scope>AUTOUBIQUITINATION</scope>
    <scope>PHOSPHORYLATION</scope>
    <scope>DISRUPTION PHENOTYPE</scope>
    <scope>MUTAGENESIS OF 29-CYS--HIS-31 AND LYS-176</scope>
    <source>
        <strain>cv. Columbia</strain>
    </source>
</reference>
<reference key="8">
    <citation type="journal article" date="2011" name="Plant Physiol.">
        <title>The KEEP ON GOING protein of Arabidopsis recruits the ENHANCED DISEASE RESISTANCE1 protein to trans-Golgi network/early endosome vesicles.</title>
        <authorList>
            <person name="Gu Y."/>
            <person name="Innes R.W."/>
        </authorList>
    </citation>
    <scope>FUNCTION</scope>
    <scope>SUBCELLULAR LOCATION</scope>
    <scope>INTERACTION WITH EDR1</scope>
    <scope>MUTAGENESIS OF GLY-1144</scope>
</reference>
<accession>Q9FY48</accession>
<accession>Q27YP2</accession>
<accession>Q9FY47</accession>
<proteinExistence type="evidence at protein level"/>
<evidence type="ECO:0000250" key="1"/>
<evidence type="ECO:0000255" key="2">
    <source>
        <dbReference type="PROSITE-ProRule" id="PRU00159"/>
    </source>
</evidence>
<evidence type="ECO:0000255" key="3">
    <source>
        <dbReference type="PROSITE-ProRule" id="PRU00175"/>
    </source>
</evidence>
<evidence type="ECO:0000256" key="4">
    <source>
        <dbReference type="SAM" id="MobiDB-lite"/>
    </source>
</evidence>
<evidence type="ECO:0000269" key="5">
    <source>
    </source>
</evidence>
<evidence type="ECO:0000269" key="6">
    <source>
    </source>
</evidence>
<evidence type="ECO:0000269" key="7">
    <source>
    </source>
</evidence>
<evidence type="ECO:0000269" key="8">
    <source>
    </source>
</evidence>
<evidence type="ECO:0000305" key="9"/>
<keyword id="KW-0938">Abscisic acid signaling pathway</keyword>
<keyword id="KW-0025">Alternative splicing</keyword>
<keyword id="KW-0040">ANK repeat</keyword>
<keyword id="KW-0067">ATP-binding</keyword>
<keyword id="KW-0967">Endosome</keyword>
<keyword id="KW-0333">Golgi apparatus</keyword>
<keyword id="KW-0418">Kinase</keyword>
<keyword id="KW-0479">Metal-binding</keyword>
<keyword id="KW-0547">Nucleotide-binding</keyword>
<keyword id="KW-0597">Phosphoprotein</keyword>
<keyword id="KW-1185">Reference proteome</keyword>
<keyword id="KW-0677">Repeat</keyword>
<keyword id="KW-0723">Serine/threonine-protein kinase</keyword>
<keyword id="KW-0808">Transferase</keyword>
<keyword id="KW-0832">Ubl conjugation</keyword>
<keyword id="KW-0833">Ubl conjugation pathway</keyword>
<keyword id="KW-0862">Zinc</keyword>
<keyword id="KW-0863">Zinc-finger</keyword>
<protein>
    <recommendedName>
        <fullName>E3 ubiquitin-protein ligase KEG</fullName>
        <ecNumber>2.3.2.27</ecNumber>
        <ecNumber>2.7.11.1</ecNumber>
    </recommendedName>
    <alternativeName>
        <fullName>Protein KEEP ON GOING</fullName>
    </alternativeName>
    <alternativeName>
        <fullName>RING finger protein KEG</fullName>
    </alternativeName>
    <alternativeName>
        <fullName evidence="9">RING-type E3 ubiquitin transferase KEG</fullName>
    </alternativeName>
</protein>
<dbReference type="EC" id="2.3.2.27"/>
<dbReference type="EC" id="2.7.11.1"/>
<dbReference type="EMBL" id="DQ315360">
    <property type="protein sequence ID" value="ABC46683.1"/>
    <property type="molecule type" value="mRNA"/>
</dbReference>
<dbReference type="EMBL" id="AL391710">
    <property type="protein sequence ID" value="CAC05430.1"/>
    <property type="status" value="ALT_SEQ"/>
    <property type="molecule type" value="Genomic_DNA"/>
</dbReference>
<dbReference type="EMBL" id="AL391710">
    <property type="protein sequence ID" value="CAC05431.1"/>
    <property type="status" value="ALT_SEQ"/>
    <property type="molecule type" value="Genomic_DNA"/>
</dbReference>
<dbReference type="EMBL" id="CP002688">
    <property type="protein sequence ID" value="AED91908.1"/>
    <property type="molecule type" value="Genomic_DNA"/>
</dbReference>
<dbReference type="RefSeq" id="NP_196857.2">
    <molecule id="Q9FY48-1"/>
    <property type="nucleotide sequence ID" value="NM_121356.3"/>
</dbReference>
<dbReference type="SMR" id="Q9FY48"/>
<dbReference type="BioGRID" id="16475">
    <property type="interactions" value="12"/>
</dbReference>
<dbReference type="FunCoup" id="Q9FY48">
    <property type="interactions" value="1753"/>
</dbReference>
<dbReference type="IntAct" id="Q9FY48">
    <property type="interactions" value="1"/>
</dbReference>
<dbReference type="STRING" id="3702.Q9FY48"/>
<dbReference type="iPTMnet" id="Q9FY48"/>
<dbReference type="PaxDb" id="3702-AT5G13530.1"/>
<dbReference type="ProteomicsDB" id="237084">
    <molecule id="Q9FY48-1"/>
</dbReference>
<dbReference type="EnsemblPlants" id="AT5G13530.1">
    <molecule id="Q9FY48-1"/>
    <property type="protein sequence ID" value="AT5G13530.1"/>
    <property type="gene ID" value="AT5G13530"/>
</dbReference>
<dbReference type="GeneID" id="831197"/>
<dbReference type="Gramene" id="AT5G13530.1">
    <molecule id="Q9FY48-1"/>
    <property type="protein sequence ID" value="AT5G13530.1"/>
    <property type="gene ID" value="AT5G13530"/>
</dbReference>
<dbReference type="KEGG" id="ath:AT5G13530"/>
<dbReference type="Araport" id="AT5G13530"/>
<dbReference type="TAIR" id="AT5G13530">
    <property type="gene designation" value="KEG"/>
</dbReference>
<dbReference type="eggNOG" id="KOG0198">
    <property type="taxonomic scope" value="Eukaryota"/>
</dbReference>
<dbReference type="eggNOG" id="KOG0504">
    <property type="taxonomic scope" value="Eukaryota"/>
</dbReference>
<dbReference type="eggNOG" id="KOG4185">
    <property type="taxonomic scope" value="Eukaryota"/>
</dbReference>
<dbReference type="HOGENOM" id="CLU_243239_0_0_1"/>
<dbReference type="InParanoid" id="Q9FY48"/>
<dbReference type="OMA" id="IVRVEEY"/>
<dbReference type="PhylomeDB" id="Q9FY48"/>
<dbReference type="BRENDA" id="2.3.2.27">
    <property type="organism ID" value="399"/>
</dbReference>
<dbReference type="UniPathway" id="UPA00143"/>
<dbReference type="PRO" id="PR:Q9FY48"/>
<dbReference type="Proteomes" id="UP000006548">
    <property type="component" value="Chromosome 5"/>
</dbReference>
<dbReference type="ExpressionAtlas" id="Q9FY48">
    <property type="expression patterns" value="baseline and differential"/>
</dbReference>
<dbReference type="GO" id="GO:0005769">
    <property type="term" value="C:early endosome"/>
    <property type="evidence" value="ECO:0000314"/>
    <property type="project" value="TAIR"/>
</dbReference>
<dbReference type="GO" id="GO:0005802">
    <property type="term" value="C:trans-Golgi network"/>
    <property type="evidence" value="ECO:0000314"/>
    <property type="project" value="TAIR"/>
</dbReference>
<dbReference type="GO" id="GO:0005524">
    <property type="term" value="F:ATP binding"/>
    <property type="evidence" value="ECO:0007669"/>
    <property type="project" value="UniProtKB-KW"/>
</dbReference>
<dbReference type="GO" id="GO:0004672">
    <property type="term" value="F:protein kinase activity"/>
    <property type="evidence" value="ECO:0000314"/>
    <property type="project" value="TAIR"/>
</dbReference>
<dbReference type="GO" id="GO:0106310">
    <property type="term" value="F:protein serine kinase activity"/>
    <property type="evidence" value="ECO:0007669"/>
    <property type="project" value="RHEA"/>
</dbReference>
<dbReference type="GO" id="GO:0004674">
    <property type="term" value="F:protein serine/threonine kinase activity"/>
    <property type="evidence" value="ECO:0007669"/>
    <property type="project" value="UniProtKB-KW"/>
</dbReference>
<dbReference type="GO" id="GO:0004842">
    <property type="term" value="F:ubiquitin-protein transferase activity"/>
    <property type="evidence" value="ECO:0000314"/>
    <property type="project" value="TAIR"/>
</dbReference>
<dbReference type="GO" id="GO:0008270">
    <property type="term" value="F:zinc ion binding"/>
    <property type="evidence" value="ECO:0007669"/>
    <property type="project" value="UniProtKB-KW"/>
</dbReference>
<dbReference type="GO" id="GO:0009738">
    <property type="term" value="P:abscisic acid-activated signaling pathway"/>
    <property type="evidence" value="ECO:0000315"/>
    <property type="project" value="TAIR"/>
</dbReference>
<dbReference type="GO" id="GO:0006952">
    <property type="term" value="P:defense response"/>
    <property type="evidence" value="ECO:0000315"/>
    <property type="project" value="TAIR"/>
</dbReference>
<dbReference type="GO" id="GO:0048589">
    <property type="term" value="P:developmental growth"/>
    <property type="evidence" value="ECO:0000315"/>
    <property type="project" value="TAIR"/>
</dbReference>
<dbReference type="GO" id="GO:0016197">
    <property type="term" value="P:endosomal transport"/>
    <property type="evidence" value="ECO:0000315"/>
    <property type="project" value="TAIR"/>
</dbReference>
<dbReference type="GO" id="GO:0045324">
    <property type="term" value="P:late endosome to vacuole transport"/>
    <property type="evidence" value="ECO:0000314"/>
    <property type="project" value="TAIR"/>
</dbReference>
<dbReference type="GO" id="GO:0009788">
    <property type="term" value="P:negative regulation of abscisic acid-activated signaling pathway"/>
    <property type="evidence" value="ECO:0000315"/>
    <property type="project" value="TAIR"/>
</dbReference>
<dbReference type="GO" id="GO:0016567">
    <property type="term" value="P:protein ubiquitination"/>
    <property type="evidence" value="ECO:0000314"/>
    <property type="project" value="TAIR"/>
</dbReference>
<dbReference type="GO" id="GO:0009737">
    <property type="term" value="P:response to abscisic acid"/>
    <property type="evidence" value="ECO:0000315"/>
    <property type="project" value="TAIR"/>
</dbReference>
<dbReference type="GO" id="GO:0032940">
    <property type="term" value="P:secretion by cell"/>
    <property type="evidence" value="ECO:0000315"/>
    <property type="project" value="TAIR"/>
</dbReference>
<dbReference type="CDD" id="cd23140">
    <property type="entry name" value="RING-HC_KEG-like"/>
    <property type="match status" value="1"/>
</dbReference>
<dbReference type="CDD" id="cd14014">
    <property type="entry name" value="STKc_PknB_like"/>
    <property type="match status" value="1"/>
</dbReference>
<dbReference type="FunFam" id="1.25.40.20:FF:000713">
    <property type="entry name" value="E3 ubiquitin-protein ligase KEG"/>
    <property type="match status" value="1"/>
</dbReference>
<dbReference type="FunFam" id="1.25.40.20:FF:001113">
    <property type="entry name" value="E3 ubiquitin-protein ligase KEG"/>
    <property type="match status" value="1"/>
</dbReference>
<dbReference type="Gene3D" id="1.25.40.20">
    <property type="entry name" value="Ankyrin repeat-containing domain"/>
    <property type="match status" value="2"/>
</dbReference>
<dbReference type="Gene3D" id="1.10.510.10">
    <property type="entry name" value="Transferase(Phosphotransferase) domain 1"/>
    <property type="match status" value="1"/>
</dbReference>
<dbReference type="Gene3D" id="3.30.40.10">
    <property type="entry name" value="Zinc/RING finger domain, C3HC4 (zinc finger)"/>
    <property type="match status" value="1"/>
</dbReference>
<dbReference type="InterPro" id="IPR002110">
    <property type="entry name" value="Ankyrin_rpt"/>
</dbReference>
<dbReference type="InterPro" id="IPR036770">
    <property type="entry name" value="Ankyrin_rpt-contain_sf"/>
</dbReference>
<dbReference type="InterPro" id="IPR044584">
    <property type="entry name" value="KEG"/>
</dbReference>
<dbReference type="InterPro" id="IPR011009">
    <property type="entry name" value="Kinase-like_dom_sf"/>
</dbReference>
<dbReference type="InterPro" id="IPR000719">
    <property type="entry name" value="Prot_kinase_dom"/>
</dbReference>
<dbReference type="InterPro" id="IPR040847">
    <property type="entry name" value="SH3_15"/>
</dbReference>
<dbReference type="InterPro" id="IPR027370">
    <property type="entry name" value="Znf-RING_euk"/>
</dbReference>
<dbReference type="InterPro" id="IPR001841">
    <property type="entry name" value="Znf_RING"/>
</dbReference>
<dbReference type="InterPro" id="IPR013083">
    <property type="entry name" value="Znf_RING/FYVE/PHD"/>
</dbReference>
<dbReference type="InterPro" id="IPR017907">
    <property type="entry name" value="Znf_RING_CS"/>
</dbReference>
<dbReference type="PANTHER" id="PTHR46960">
    <property type="entry name" value="E3 UBIQUITIN-PROTEIN LIGASE KEG"/>
    <property type="match status" value="1"/>
</dbReference>
<dbReference type="PANTHER" id="PTHR46960:SF1">
    <property type="entry name" value="E3 UBIQUITIN-PROTEIN LIGASE KEG"/>
    <property type="match status" value="1"/>
</dbReference>
<dbReference type="Pfam" id="PF12796">
    <property type="entry name" value="Ank_2"/>
    <property type="match status" value="3"/>
</dbReference>
<dbReference type="Pfam" id="PF00069">
    <property type="entry name" value="Pkinase"/>
    <property type="match status" value="1"/>
</dbReference>
<dbReference type="Pfam" id="PF18346">
    <property type="entry name" value="SH3_15"/>
    <property type="match status" value="7"/>
</dbReference>
<dbReference type="Pfam" id="PF13445">
    <property type="entry name" value="zf-RING_UBOX"/>
    <property type="match status" value="1"/>
</dbReference>
<dbReference type="PRINTS" id="PR01415">
    <property type="entry name" value="ANKYRIN"/>
</dbReference>
<dbReference type="SMART" id="SM00248">
    <property type="entry name" value="ANK"/>
    <property type="match status" value="9"/>
</dbReference>
<dbReference type="SMART" id="SM00184">
    <property type="entry name" value="RING"/>
    <property type="match status" value="1"/>
</dbReference>
<dbReference type="SUPFAM" id="SSF48403">
    <property type="entry name" value="Ankyrin repeat"/>
    <property type="match status" value="1"/>
</dbReference>
<dbReference type="SUPFAM" id="SSF56112">
    <property type="entry name" value="Protein kinase-like (PK-like)"/>
    <property type="match status" value="1"/>
</dbReference>
<dbReference type="SUPFAM" id="SSF57850">
    <property type="entry name" value="RING/U-box"/>
    <property type="match status" value="1"/>
</dbReference>
<dbReference type="PROSITE" id="PS50297">
    <property type="entry name" value="ANK_REP_REGION"/>
    <property type="match status" value="1"/>
</dbReference>
<dbReference type="PROSITE" id="PS50088">
    <property type="entry name" value="ANK_REPEAT"/>
    <property type="match status" value="5"/>
</dbReference>
<dbReference type="PROSITE" id="PS50011">
    <property type="entry name" value="PROTEIN_KINASE_DOM"/>
    <property type="match status" value="1"/>
</dbReference>
<dbReference type="PROSITE" id="PS00518">
    <property type="entry name" value="ZF_RING_1"/>
    <property type="match status" value="1"/>
</dbReference>
<dbReference type="PROSITE" id="PS50089">
    <property type="entry name" value="ZF_RING_2"/>
    <property type="match status" value="1"/>
</dbReference>
<feature type="chain" id="PRO_0000356172" description="E3 ubiquitin-protein ligase KEG">
    <location>
        <begin position="1"/>
        <end position="1625"/>
    </location>
</feature>
<feature type="domain" description="Protein kinase" evidence="2">
    <location>
        <begin position="141"/>
        <end position="427"/>
    </location>
</feature>
<feature type="repeat" description="ANK 1">
    <location>
        <begin position="467"/>
        <end position="496"/>
    </location>
</feature>
<feature type="repeat" description="ANK 2">
    <location>
        <begin position="510"/>
        <end position="540"/>
    </location>
</feature>
<feature type="repeat" description="ANK 3">
    <location>
        <begin position="544"/>
        <end position="573"/>
    </location>
</feature>
<feature type="repeat" description="ANK 4">
    <location>
        <begin position="579"/>
        <end position="608"/>
    </location>
</feature>
<feature type="repeat" description="ANK 5">
    <location>
        <begin position="612"/>
        <end position="641"/>
    </location>
</feature>
<feature type="repeat" description="ANK 6">
    <location>
        <begin position="647"/>
        <end position="676"/>
    </location>
</feature>
<feature type="repeat" description="ANK 7">
    <location>
        <begin position="685"/>
        <end position="720"/>
    </location>
</feature>
<feature type="repeat" description="ANK 8">
    <location>
        <begin position="725"/>
        <end position="754"/>
    </location>
</feature>
<feature type="repeat" description="ANK 9">
    <location>
        <begin position="758"/>
        <end position="787"/>
    </location>
</feature>
<feature type="repeat" description="ANK 10">
    <location>
        <begin position="791"/>
        <end position="826"/>
    </location>
</feature>
<feature type="repeat" description="ANK 11">
    <location>
        <begin position="832"/>
        <end position="863"/>
    </location>
</feature>
<feature type="zinc finger region" description="RING-type" evidence="3">
    <location>
        <begin position="10"/>
        <end position="56"/>
    </location>
</feature>
<feature type="region of interest" description="Disordered" evidence="4">
    <location>
        <begin position="91"/>
        <end position="110"/>
    </location>
</feature>
<feature type="compositionally biased region" description="Acidic residues" evidence="4">
    <location>
        <begin position="91"/>
        <end position="106"/>
    </location>
</feature>
<feature type="binding site" evidence="2">
    <location>
        <begin position="147"/>
        <end position="155"/>
    </location>
    <ligand>
        <name>ATP</name>
        <dbReference type="ChEBI" id="CHEBI:30616"/>
    </ligand>
</feature>
<feature type="binding site" evidence="2">
    <location>
        <position position="176"/>
    </location>
    <ligand>
        <name>ATP</name>
        <dbReference type="ChEBI" id="CHEBI:30616"/>
    </ligand>
</feature>
<feature type="mutagenesis site" description="Small sterile plants unable to polyubiquitinate ABI5." evidence="7">
    <original>CGH</original>
    <variation>AGA</variation>
    <location>
        <begin position="29"/>
        <end position="31"/>
    </location>
</feature>
<feature type="mutagenesis site" description="Loss of kinase activity associated with the loss of ABA-induced KEG autoubiquitination and subsequent degradation." evidence="7">
    <original>K</original>
    <variation>R</variation>
    <location>
        <position position="176"/>
    </location>
</feature>
<feature type="mutagenesis site" description="In keg-4/supp69; confers resistance to 6% glucose and suppresses abscisic acid signaling. Suppression of EDR1 disruption- (edr1-) mediated disease resistance. Reduced endosomal localization but increased localization to the endoplasmic reticulum and cytosol." evidence="6 8">
    <original>G</original>
    <variation>S</variation>
    <location>
        <position position="1144"/>
    </location>
</feature>
<organism>
    <name type="scientific">Arabidopsis thaliana</name>
    <name type="common">Mouse-ear cress</name>
    <dbReference type="NCBI Taxonomy" id="3702"/>
    <lineage>
        <taxon>Eukaryota</taxon>
        <taxon>Viridiplantae</taxon>
        <taxon>Streptophyta</taxon>
        <taxon>Embryophyta</taxon>
        <taxon>Tracheophyta</taxon>
        <taxon>Spermatophyta</taxon>
        <taxon>Magnoliopsida</taxon>
        <taxon>eudicotyledons</taxon>
        <taxon>Gunneridae</taxon>
        <taxon>Pentapetalae</taxon>
        <taxon>rosids</taxon>
        <taxon>malvids</taxon>
        <taxon>Brassicales</taxon>
        <taxon>Brassicaceae</taxon>
        <taxon>Camelineae</taxon>
        <taxon>Arabidopsis</taxon>
    </lineage>
</organism>
<sequence>MVGRVKVPCCSVCHTRYNEDERVPLLLQCGHGFCKDCLSKMFSTSSDTTLTCPRCRHVSVVGNSVQGLRKNYAMLALIHAASGGANFDCDYTDDEDDDDEEDGSDEDGARAARGFHASSSINSLCGPVIEVGAHPEMKLVRQIGEESSSGGFGGVEMWDATVAGGGGRCKHRVAVKKMTLTEDMDVEWMQGQLESLRRASMWCRNVCTFHGVVKMDGSLCLLMDRCFGSVQSEMQRNEGRLTLEQILRYGADVARGVAELHAAGVICMNIKPSNLLLDASGNAVVSDYGLAPILKKPTCQKTRPEFDSSKVTLYTDCVTLSPHYTAPEAWGPVKKLFWEDASGVSPESDAWSFGCTLVEMCTGSTPWDGLSREEIFQAVVKARKVPPQYERIVGVGIPRELWKMIGECLQFKPSKRPTFNAMLATFLRHLQEIPRSPSASPDNGIAKICEVNIVQAPRATNIGVFQDNPNNLHRVVLEGDFEGVRNILAKAAAGGGGSSVRSLLEAQNADGQSALHLACRRGSAELVEAILEYGEANVDIVDKDGDPPLVFALAAGSPQCVHVLIKKGANVRSRLREGSGPSVAHVCSYHGQPDCMRELLVAGADPNAVDDEGETVLHRAVAKKYTDCAIVILENGGSRSMTVSNAKCLTPLHMCVATWNVAVIKRWVEVSSPEEISQAINIPSPVGTALCMAASIRKDHEKEGRELVQILLAAGADPTAQDAQHGRTALHTAAMANNVELVRVILDAGVNANIRNVHNTIPLHMALARGANSCVSLLLESGSDCNIQDDEGDNAFHIAADAAKMIRENLDWLIVMLRSPDAAVDVRNHSGKTVRDFLEALPREWISEDLMEALLKRGVHLSPTIYEVGDWVKFKRGITTPLHGWQGAKPKSVGFVQTILEKEDMIIAFCSGEARVLANEVVKLIPLDRGQHVRLRADVKEPRFGWRGQSRDSVGTVLCVDEDGILRVGFPGASRGWKADPAEMERVEEFKVGDWVRIRQNLTSAKHGFGSVVPGSMGIVYCVRPDSSLLVELSYLPNPWHCEPEEVEPVAPFRIGDRVCVKRSVAEPRYAWGGETHHSVGKISEIENDGLLIIEIPNRPIPWQADPSDMEKIDDFKVGDWVRVKASVSSPKYGWEDITRNSIGVMHSLDEDGDVGIAFCFRSKPFSCSVTDVEKVTPFHVGQEIHMTPSITQPRLGWSNETPATIGKVMRIDMDGTLSAQVTGRQTLWRVSPGDAELLSGFEVGDWVRSKPSLGNRPSYDWSNVGRESIAVVHSIQETGYLELACCFRKGRWSTHYTDLEKIPALKVGQFVHFQKGITEPRWGWRAAKPDSRGIITTVHADGEVRVAFFGLPGLWRGDPADLEVEPMFEVGEWVRLREGVSCWKSVGPGSVGVVHGVGYEGDEWDGTTSVSFCGEQERWAGPTSHLEKAKKLVVGQKTRVKLAVKQPRFGWSGHSHGSVGTISAIDADGKLRIYTPAGSKTWMLDPSEVETIEEEELKIGDWVRVKASITTPTYQWGEVNPSSTGVVHRMEDGDLCVSFCFLDRLWLCKAGELERIRPFRIGDRVKIKDGLVTPRWGWGMETHASKGHVVGVDANGKLRIKFLWREGRPWIGDPADIVLDETSG</sequence>
<gene>
    <name type="primary">KEG</name>
    <name type="ordered locus">At5g13530</name>
    <name type="ORF">T6I14.60</name>
    <name type="ORF">T6I14.70</name>
</gene>